<dbReference type="EC" id="2.1.1.199" evidence="1"/>
<dbReference type="EMBL" id="CP000386">
    <property type="protein sequence ID" value="ABG04462.1"/>
    <property type="molecule type" value="Genomic_DNA"/>
</dbReference>
<dbReference type="RefSeq" id="WP_011564479.1">
    <property type="nucleotide sequence ID" value="NC_008148.1"/>
</dbReference>
<dbReference type="SMR" id="Q1AVW6"/>
<dbReference type="STRING" id="266117.Rxyl_1500"/>
<dbReference type="KEGG" id="rxy:Rxyl_1500"/>
<dbReference type="eggNOG" id="COG0275">
    <property type="taxonomic scope" value="Bacteria"/>
</dbReference>
<dbReference type="HOGENOM" id="CLU_038422_2_0_11"/>
<dbReference type="OrthoDB" id="9806637at2"/>
<dbReference type="PhylomeDB" id="Q1AVW6"/>
<dbReference type="Proteomes" id="UP000006637">
    <property type="component" value="Chromosome"/>
</dbReference>
<dbReference type="GO" id="GO:0005737">
    <property type="term" value="C:cytoplasm"/>
    <property type="evidence" value="ECO:0007669"/>
    <property type="project" value="UniProtKB-SubCell"/>
</dbReference>
<dbReference type="GO" id="GO:0071424">
    <property type="term" value="F:rRNA (cytosine-N4-)-methyltransferase activity"/>
    <property type="evidence" value="ECO:0007669"/>
    <property type="project" value="UniProtKB-UniRule"/>
</dbReference>
<dbReference type="GO" id="GO:0070475">
    <property type="term" value="P:rRNA base methylation"/>
    <property type="evidence" value="ECO:0007669"/>
    <property type="project" value="UniProtKB-UniRule"/>
</dbReference>
<dbReference type="CDD" id="cd02440">
    <property type="entry name" value="AdoMet_MTases"/>
    <property type="match status" value="1"/>
</dbReference>
<dbReference type="Gene3D" id="1.10.150.170">
    <property type="entry name" value="Putative methyltransferase TM0872, insert domain"/>
    <property type="match status" value="1"/>
</dbReference>
<dbReference type="Gene3D" id="3.40.50.150">
    <property type="entry name" value="Vaccinia Virus protein VP39"/>
    <property type="match status" value="1"/>
</dbReference>
<dbReference type="HAMAP" id="MF_01007">
    <property type="entry name" value="16SrRNA_methyltr_H"/>
    <property type="match status" value="1"/>
</dbReference>
<dbReference type="InterPro" id="IPR002903">
    <property type="entry name" value="RsmH"/>
</dbReference>
<dbReference type="InterPro" id="IPR023397">
    <property type="entry name" value="SAM-dep_MeTrfase_MraW_recog"/>
</dbReference>
<dbReference type="InterPro" id="IPR029063">
    <property type="entry name" value="SAM-dependent_MTases_sf"/>
</dbReference>
<dbReference type="NCBIfam" id="TIGR00006">
    <property type="entry name" value="16S rRNA (cytosine(1402)-N(4))-methyltransferase RsmH"/>
    <property type="match status" value="1"/>
</dbReference>
<dbReference type="PANTHER" id="PTHR11265:SF0">
    <property type="entry name" value="12S RRNA N4-METHYLCYTIDINE METHYLTRANSFERASE"/>
    <property type="match status" value="1"/>
</dbReference>
<dbReference type="PANTHER" id="PTHR11265">
    <property type="entry name" value="S-ADENOSYL-METHYLTRANSFERASE MRAW"/>
    <property type="match status" value="1"/>
</dbReference>
<dbReference type="Pfam" id="PF01795">
    <property type="entry name" value="Methyltransf_5"/>
    <property type="match status" value="1"/>
</dbReference>
<dbReference type="PIRSF" id="PIRSF004486">
    <property type="entry name" value="MraW"/>
    <property type="match status" value="1"/>
</dbReference>
<dbReference type="SUPFAM" id="SSF81799">
    <property type="entry name" value="Putative methyltransferase TM0872, insert domain"/>
    <property type="match status" value="1"/>
</dbReference>
<dbReference type="SUPFAM" id="SSF53335">
    <property type="entry name" value="S-adenosyl-L-methionine-dependent methyltransferases"/>
    <property type="match status" value="1"/>
</dbReference>
<name>RSMH_RUBXD</name>
<sequence length="312" mass="34013">MAAAQHRPVMLEEAVRALAPSGGDVVVDATFGGGGHSARVLRELGPGGRVVGIDRDPEARGRAERLLGDPRFSFEQGPYDEVLWRMVGRGERADALLFDLGLSSFQVDDPRRGFSYTREGPLDMRMDPGSGPSAADFLNAAGEAEIAGVLSEYGDVPRAQARRVAREILRRRPLRTTADLREAVRAAVGWAPRGGNPAKRVFQAVRIRVNDELGGLRRALEAAERLLVPGGRLVVISFHSGEDRLVKRFIAEREGRCTCPPELPVCVCGARPVFRRGPVLRPSEREVAENPRSAPARMRVAFRTAEPAREAS</sequence>
<gene>
    <name evidence="1" type="primary">rsmH</name>
    <name type="synonym">mraW</name>
    <name type="ordered locus">Rxyl_1500</name>
</gene>
<comment type="function">
    <text evidence="1">Specifically methylates the N4 position of cytidine in position 1402 (C1402) of 16S rRNA.</text>
</comment>
<comment type="catalytic activity">
    <reaction evidence="1">
        <text>cytidine(1402) in 16S rRNA + S-adenosyl-L-methionine = N(4)-methylcytidine(1402) in 16S rRNA + S-adenosyl-L-homocysteine + H(+)</text>
        <dbReference type="Rhea" id="RHEA:42928"/>
        <dbReference type="Rhea" id="RHEA-COMP:10286"/>
        <dbReference type="Rhea" id="RHEA-COMP:10287"/>
        <dbReference type="ChEBI" id="CHEBI:15378"/>
        <dbReference type="ChEBI" id="CHEBI:57856"/>
        <dbReference type="ChEBI" id="CHEBI:59789"/>
        <dbReference type="ChEBI" id="CHEBI:74506"/>
        <dbReference type="ChEBI" id="CHEBI:82748"/>
        <dbReference type="EC" id="2.1.1.199"/>
    </reaction>
</comment>
<comment type="subcellular location">
    <subcellularLocation>
        <location evidence="1">Cytoplasm</location>
    </subcellularLocation>
</comment>
<comment type="similarity">
    <text evidence="1">Belongs to the methyltransferase superfamily. RsmH family.</text>
</comment>
<evidence type="ECO:0000255" key="1">
    <source>
        <dbReference type="HAMAP-Rule" id="MF_01007"/>
    </source>
</evidence>
<reference key="1">
    <citation type="submission" date="2006-06" db="EMBL/GenBank/DDBJ databases">
        <title>Complete sequence of Rubrobacter xylanophilus DSM 9941.</title>
        <authorList>
            <consortium name="US DOE Joint Genome Institute"/>
            <person name="Copeland A."/>
            <person name="Lucas S."/>
            <person name="Lapidus A."/>
            <person name="Barry K."/>
            <person name="Detter J.C."/>
            <person name="Glavina del Rio T."/>
            <person name="Hammon N."/>
            <person name="Israni S."/>
            <person name="Dalin E."/>
            <person name="Tice H."/>
            <person name="Pitluck S."/>
            <person name="Munk A.C."/>
            <person name="Brettin T."/>
            <person name="Bruce D."/>
            <person name="Han C."/>
            <person name="Tapia R."/>
            <person name="Gilna P."/>
            <person name="Schmutz J."/>
            <person name="Larimer F."/>
            <person name="Land M."/>
            <person name="Hauser L."/>
            <person name="Kyrpides N."/>
            <person name="Lykidis A."/>
            <person name="da Costa M.S."/>
            <person name="Rainey F.A."/>
            <person name="Empadinhas N."/>
            <person name="Jolivet E."/>
            <person name="Battista J.R."/>
            <person name="Richardson P."/>
        </authorList>
    </citation>
    <scope>NUCLEOTIDE SEQUENCE [LARGE SCALE GENOMIC DNA]</scope>
    <source>
        <strain>DSM 9941 / JCM 11954 / NBRC 16129 / PRD-1</strain>
    </source>
</reference>
<proteinExistence type="inferred from homology"/>
<feature type="chain" id="PRO_0000387090" description="Ribosomal RNA small subunit methyltransferase H">
    <location>
        <begin position="1"/>
        <end position="312"/>
    </location>
</feature>
<feature type="binding site" evidence="1">
    <location>
        <begin position="34"/>
        <end position="36"/>
    </location>
    <ligand>
        <name>S-adenosyl-L-methionine</name>
        <dbReference type="ChEBI" id="CHEBI:59789"/>
    </ligand>
</feature>
<feature type="binding site" evidence="1">
    <location>
        <position position="54"/>
    </location>
    <ligand>
        <name>S-adenosyl-L-methionine</name>
        <dbReference type="ChEBI" id="CHEBI:59789"/>
    </ligand>
</feature>
<feature type="binding site" evidence="1">
    <location>
        <position position="83"/>
    </location>
    <ligand>
        <name>S-adenosyl-L-methionine</name>
        <dbReference type="ChEBI" id="CHEBI:59789"/>
    </ligand>
</feature>
<feature type="binding site" evidence="1">
    <location>
        <position position="99"/>
    </location>
    <ligand>
        <name>S-adenosyl-L-methionine</name>
        <dbReference type="ChEBI" id="CHEBI:59789"/>
    </ligand>
</feature>
<feature type="binding site" evidence="1">
    <location>
        <position position="106"/>
    </location>
    <ligand>
        <name>S-adenosyl-L-methionine</name>
        <dbReference type="ChEBI" id="CHEBI:59789"/>
    </ligand>
</feature>
<accession>Q1AVW6</accession>
<organism>
    <name type="scientific">Rubrobacter xylanophilus (strain DSM 9941 / JCM 11954 / NBRC 16129 / PRD-1)</name>
    <dbReference type="NCBI Taxonomy" id="266117"/>
    <lineage>
        <taxon>Bacteria</taxon>
        <taxon>Bacillati</taxon>
        <taxon>Actinomycetota</taxon>
        <taxon>Rubrobacteria</taxon>
        <taxon>Rubrobacterales</taxon>
        <taxon>Rubrobacteraceae</taxon>
        <taxon>Rubrobacter</taxon>
    </lineage>
</organism>
<protein>
    <recommendedName>
        <fullName evidence="1">Ribosomal RNA small subunit methyltransferase H</fullName>
        <ecNumber evidence="1">2.1.1.199</ecNumber>
    </recommendedName>
    <alternativeName>
        <fullName evidence="1">16S rRNA m(4)C1402 methyltransferase</fullName>
    </alternativeName>
    <alternativeName>
        <fullName evidence="1">rRNA (cytosine-N(4)-)-methyltransferase RsmH</fullName>
    </alternativeName>
</protein>
<keyword id="KW-0963">Cytoplasm</keyword>
<keyword id="KW-0489">Methyltransferase</keyword>
<keyword id="KW-1185">Reference proteome</keyword>
<keyword id="KW-0698">rRNA processing</keyword>
<keyword id="KW-0949">S-adenosyl-L-methionine</keyword>
<keyword id="KW-0808">Transferase</keyword>